<reference key="1">
    <citation type="journal article" date="1996" name="J. Biol. Chem.">
        <title>Expression cloning of a novel suppressor of the Lec15 and Lec35 glycosylation mutations of Chinese hamster ovary cells.</title>
        <authorList>
            <person name="Ware F.E."/>
            <person name="Lehrman M.A."/>
        </authorList>
    </citation>
    <scope>NUCLEOTIDE SEQUENCE [MRNA]</scope>
</reference>
<reference key="2">
    <citation type="journal article" date="1998" name="J. Biol. Chem.">
        <authorList>
            <person name="Ware F.E."/>
            <person name="Lehrman M.A."/>
        </authorList>
    </citation>
    <scope>ERRATUM OF PUBMED:8663248</scope>
</reference>
<reference key="3">
    <citation type="submission" date="1999-01" db="EMBL/GenBank/DDBJ databases">
        <title>Mutation in B4-2-1 CHO cells defective in MPD synthase activity.</title>
        <authorList>
            <person name="Pu L."/>
            <person name="Scocca J.R."/>
            <person name="Walker B.K."/>
            <person name="Wu J.S."/>
            <person name="Krag S.S."/>
        </authorList>
    </citation>
    <scope>NUCLEOTIDE SEQUENCE [MRNA]</scope>
</reference>
<reference key="4">
    <citation type="journal article" date="2001" name="Mol. Biol. Cell">
        <title>Requirement of the Lec35 gene for all known classes of monosaccharide-P-dolichol-dependent glycosyltransferase reactions in mammals.</title>
        <authorList>
            <person name="Anand M."/>
            <person name="Rush J.S."/>
            <person name="Ray S."/>
            <person name="Doucey M.A."/>
            <person name="Weik J."/>
            <person name="Ware F.E."/>
            <person name="Hofsteenge J."/>
            <person name="Waechter C.J."/>
            <person name="Lehrman M.A."/>
        </authorList>
    </citation>
    <scope>FUNCTION</scope>
</reference>
<organism>
    <name type="scientific">Cricetulus griseus</name>
    <name type="common">Chinese hamster</name>
    <name type="synonym">Cricetulus barabensis griseus</name>
    <dbReference type="NCBI Taxonomy" id="10029"/>
    <lineage>
        <taxon>Eukaryota</taxon>
        <taxon>Metazoa</taxon>
        <taxon>Chordata</taxon>
        <taxon>Craniata</taxon>
        <taxon>Vertebrata</taxon>
        <taxon>Euteleostomi</taxon>
        <taxon>Mammalia</taxon>
        <taxon>Eutheria</taxon>
        <taxon>Euarchontoglires</taxon>
        <taxon>Glires</taxon>
        <taxon>Rodentia</taxon>
        <taxon>Myomorpha</taxon>
        <taxon>Muroidea</taxon>
        <taxon>Cricetidae</taxon>
        <taxon>Cricetinae</taxon>
        <taxon>Cricetulus</taxon>
    </lineage>
</organism>
<gene>
    <name type="primary">MPDU1</name>
</gene>
<evidence type="ECO:0000250" key="1">
    <source>
        <dbReference type="UniProtKB" id="O75352"/>
    </source>
</evidence>
<evidence type="ECO:0000255" key="2"/>
<evidence type="ECO:0000269" key="3">
    <source>
    </source>
</evidence>
<evidence type="ECO:0000305" key="4"/>
<protein>
    <recommendedName>
        <fullName>Mannose-P-dolichol utilization defect 1 protein</fullName>
    </recommendedName>
    <alternativeName>
        <fullName>Suppressor of Lec15 and Lec35 glycosylation mutation</fullName>
        <shortName>SL15</shortName>
    </alternativeName>
</protein>
<name>MPU1_CRIGR</name>
<comment type="function">
    <text evidence="3">Required for normal utilization of mannose-dolichol phosphate (Dol-P-Man) in the synthesis of N-linked and O-linked oligosaccharides and GPI anchors.</text>
</comment>
<comment type="subcellular location">
    <subcellularLocation>
        <location evidence="4">Membrane</location>
        <topology evidence="4">Multi-pass membrane protein</topology>
    </subcellularLocation>
</comment>
<comment type="similarity">
    <text evidence="4">Belongs to the MPDU1 (TC 2.A.43.3) family.</text>
</comment>
<keyword id="KW-0007">Acetylation</keyword>
<keyword id="KW-0472">Membrane</keyword>
<keyword id="KW-0677">Repeat</keyword>
<keyword id="KW-0812">Transmembrane</keyword>
<keyword id="KW-1133">Transmembrane helix</keyword>
<keyword id="KW-0813">Transport</keyword>
<feature type="initiator methionine" description="Removed" evidence="1">
    <location>
        <position position="1"/>
    </location>
</feature>
<feature type="chain" id="PRO_0000221033" description="Mannose-P-dolichol utilization defect 1 protein">
    <location>
        <begin position="2"/>
        <end position="247"/>
    </location>
</feature>
<feature type="transmembrane region" description="Helical" evidence="2">
    <location>
        <begin position="46"/>
        <end position="66"/>
    </location>
</feature>
<feature type="transmembrane region" description="Helical" evidence="2">
    <location>
        <begin position="74"/>
        <end position="94"/>
    </location>
</feature>
<feature type="transmembrane region" description="Helical" evidence="2">
    <location>
        <begin position="103"/>
        <end position="123"/>
    </location>
</feature>
<feature type="transmembrane region" description="Helical" evidence="2">
    <location>
        <begin position="128"/>
        <end position="145"/>
    </location>
</feature>
<feature type="transmembrane region" description="Helical" evidence="2">
    <location>
        <begin position="151"/>
        <end position="171"/>
    </location>
</feature>
<feature type="transmembrane region" description="Helical" evidence="2">
    <location>
        <begin position="185"/>
        <end position="205"/>
    </location>
</feature>
<feature type="transmembrane region" description="Helical" evidence="2">
    <location>
        <begin position="213"/>
        <end position="233"/>
    </location>
</feature>
<feature type="domain" description="PQ-loop 1">
    <location>
        <begin position="39"/>
        <end position="105"/>
    </location>
</feature>
<feature type="domain" description="PQ-loop 2">
    <location>
        <begin position="159"/>
        <end position="216"/>
    </location>
</feature>
<feature type="modified residue" description="N-acetylalanine" evidence="1">
    <location>
        <position position="2"/>
    </location>
</feature>
<feature type="sequence conflict" description="In Ref. 3; AAD30976." evidence="4" ref="3">
    <original>L</original>
    <variation>F</variation>
    <location>
        <position position="118"/>
    </location>
</feature>
<dbReference type="EMBL" id="U55387">
    <property type="protein sequence ID" value="AAC52600.2"/>
    <property type="molecule type" value="mRNA"/>
</dbReference>
<dbReference type="EMBL" id="AF121896">
    <property type="protein sequence ID" value="AAD30976.1"/>
    <property type="molecule type" value="mRNA"/>
</dbReference>
<dbReference type="RefSeq" id="NP_001230966.1">
    <property type="nucleotide sequence ID" value="NM_001244037.1"/>
</dbReference>
<dbReference type="TCDB" id="2.A.43.3.1">
    <property type="family name" value="the lysosomal cystine transporter (lct) family"/>
</dbReference>
<dbReference type="PaxDb" id="10029-NP_001230966.1"/>
<dbReference type="GeneID" id="100689049"/>
<dbReference type="KEGG" id="cge:100689049"/>
<dbReference type="CTD" id="9526"/>
<dbReference type="eggNOG" id="KOG3211">
    <property type="taxonomic scope" value="Eukaryota"/>
</dbReference>
<dbReference type="OrthoDB" id="271506at2759"/>
<dbReference type="Proteomes" id="UP000694386">
    <property type="component" value="Unplaced"/>
</dbReference>
<dbReference type="Proteomes" id="UP001108280">
    <property type="component" value="Chromosome 7"/>
</dbReference>
<dbReference type="GO" id="GO:0016020">
    <property type="term" value="C:membrane"/>
    <property type="evidence" value="ECO:0007669"/>
    <property type="project" value="UniProtKB-SubCell"/>
</dbReference>
<dbReference type="GO" id="GO:0009312">
    <property type="term" value="P:oligosaccharide biosynthetic process"/>
    <property type="evidence" value="ECO:0007669"/>
    <property type="project" value="TreeGrafter"/>
</dbReference>
<dbReference type="FunFam" id="1.20.1280.290:FF:000031">
    <property type="entry name" value="Mannose-P-dolichol utilization defect 1"/>
    <property type="match status" value="1"/>
</dbReference>
<dbReference type="FunFam" id="1.20.1280.290:FF:000006">
    <property type="entry name" value="mannose-P-dolichol utilization defect 1 protein"/>
    <property type="match status" value="1"/>
</dbReference>
<dbReference type="Gene3D" id="1.20.1280.290">
    <property type="match status" value="1"/>
</dbReference>
<dbReference type="InterPro" id="IPR016817">
    <property type="entry name" value="MannP-dilichol_defect-1"/>
</dbReference>
<dbReference type="InterPro" id="IPR006603">
    <property type="entry name" value="PQ-loop_rpt"/>
</dbReference>
<dbReference type="PANTHER" id="PTHR12226">
    <property type="entry name" value="MANNOSE-P-DOLICHOL UTILIZATION DEFECT 1 LEC35 -RELATED"/>
    <property type="match status" value="1"/>
</dbReference>
<dbReference type="PANTHER" id="PTHR12226:SF2">
    <property type="entry name" value="MANNOSE-P-DOLICHOL UTILIZATION DEFECT 1 PROTEIN"/>
    <property type="match status" value="1"/>
</dbReference>
<dbReference type="Pfam" id="PF04193">
    <property type="entry name" value="PQ-loop"/>
    <property type="match status" value="2"/>
</dbReference>
<dbReference type="PIRSF" id="PIRSF023381">
    <property type="entry name" value="MannP-dilichol_defect-1p"/>
    <property type="match status" value="1"/>
</dbReference>
<dbReference type="SMART" id="SM00679">
    <property type="entry name" value="CTNS"/>
    <property type="match status" value="2"/>
</dbReference>
<proteinExistence type="evidence at transcript level"/>
<sequence>MAGEADGPFKRVLVPVLLPEKCYDQLFVHWDFLHVPCLKILLSKGLGLGIVAGSLLVKLPQIFKILGAKSAEGLSLQSVMLELVALTGTVIYSITNNFPFSSWGEALFLTLQTITICLLVLHYRGDTVKGVALLACYATLLLALLSPLTPLAVVTMLQASNVPAVVVGKLLQAATNYHNGHTGQLSAITVFMLFGGSLARIFTSVQETGDPLMAGVFVVSSLCNGLIAAQVLFYWNAKPPHKHKKEQ</sequence>
<accession>Q60441</accession>
<accession>Q9R265</accession>